<sequence length="40" mass="4105">MMSEGGRIPLWIVATVAGMGVIVIVGLFFYGAYAGLGSSL</sequence>
<name>PSBJ_THEVL</name>
<gene>
    <name evidence="1" type="primary">psbJ</name>
</gene>
<dbReference type="EMBL" id="AB086860">
    <property type="protein sequence ID" value="BAC53637.1"/>
    <property type="molecule type" value="Genomic_DNA"/>
</dbReference>
<dbReference type="PDB" id="3A0B">
    <property type="method" value="X-ray"/>
    <property type="resolution" value="3.70 A"/>
    <property type="chains" value="J/j=1-40"/>
</dbReference>
<dbReference type="PDB" id="3A0H">
    <property type="method" value="X-ray"/>
    <property type="resolution" value="4.00 A"/>
    <property type="chains" value="J/j=1-40"/>
</dbReference>
<dbReference type="PDB" id="3WU2">
    <property type="method" value="X-ray"/>
    <property type="resolution" value="1.90 A"/>
    <property type="chains" value="J/j=1-40"/>
</dbReference>
<dbReference type="PDB" id="4IL6">
    <property type="method" value="X-ray"/>
    <property type="resolution" value="2.10 A"/>
    <property type="chains" value="J/j=4-40"/>
</dbReference>
<dbReference type="PDB" id="4UB6">
    <property type="method" value="X-ray"/>
    <property type="resolution" value="1.95 A"/>
    <property type="chains" value="J/j=2-40"/>
</dbReference>
<dbReference type="PDB" id="4UB8">
    <property type="method" value="X-ray"/>
    <property type="resolution" value="1.95 A"/>
    <property type="chains" value="J/j=2-40"/>
</dbReference>
<dbReference type="PDB" id="5B5E">
    <property type="method" value="X-ray"/>
    <property type="resolution" value="1.87 A"/>
    <property type="chains" value="J/j=1-40"/>
</dbReference>
<dbReference type="PDB" id="5B66">
    <property type="method" value="X-ray"/>
    <property type="resolution" value="1.85 A"/>
    <property type="chains" value="J/j=1-40"/>
</dbReference>
<dbReference type="PDB" id="5GTH">
    <property type="method" value="X-ray"/>
    <property type="resolution" value="2.50 A"/>
    <property type="chains" value="J/j=2-40"/>
</dbReference>
<dbReference type="PDB" id="5GTI">
    <property type="method" value="X-ray"/>
    <property type="resolution" value="2.50 A"/>
    <property type="chains" value="J/j=2-40"/>
</dbReference>
<dbReference type="PDB" id="5V2C">
    <property type="method" value="X-ray"/>
    <property type="resolution" value="1.90 A"/>
    <property type="chains" value="J/j=1-40"/>
</dbReference>
<dbReference type="PDB" id="5WS5">
    <property type="method" value="X-ray"/>
    <property type="resolution" value="2.35 A"/>
    <property type="chains" value="J/j=2-40"/>
</dbReference>
<dbReference type="PDB" id="5WS6">
    <property type="method" value="X-ray"/>
    <property type="resolution" value="2.35 A"/>
    <property type="chains" value="J/j=2-40"/>
</dbReference>
<dbReference type="PDB" id="6JLJ">
    <property type="method" value="X-ray"/>
    <property type="resolution" value="2.15 A"/>
    <property type="chains" value="J/j=2-40"/>
</dbReference>
<dbReference type="PDB" id="6JLK">
    <property type="method" value="X-ray"/>
    <property type="resolution" value="2.15 A"/>
    <property type="chains" value="J/j=2-40"/>
</dbReference>
<dbReference type="PDB" id="6JLL">
    <property type="method" value="X-ray"/>
    <property type="resolution" value="2.15 A"/>
    <property type="chains" value="J/j=2-40"/>
</dbReference>
<dbReference type="PDB" id="6JLM">
    <property type="method" value="X-ray"/>
    <property type="resolution" value="2.35 A"/>
    <property type="chains" value="J/j=2-40"/>
</dbReference>
<dbReference type="PDB" id="6JLN">
    <property type="method" value="X-ray"/>
    <property type="resolution" value="2.40 A"/>
    <property type="chains" value="J/j=2-40"/>
</dbReference>
<dbReference type="PDB" id="6JLO">
    <property type="method" value="X-ray"/>
    <property type="resolution" value="2.40 A"/>
    <property type="chains" value="J/j=2-40"/>
</dbReference>
<dbReference type="PDB" id="6JLP">
    <property type="method" value="X-ray"/>
    <property type="resolution" value="2.50 A"/>
    <property type="chains" value="J/j=2-40"/>
</dbReference>
<dbReference type="PDB" id="7CJI">
    <property type="method" value="X-ray"/>
    <property type="resolution" value="2.35 A"/>
    <property type="chains" value="J/j=2-40"/>
</dbReference>
<dbReference type="PDB" id="7CJJ">
    <property type="method" value="X-ray"/>
    <property type="resolution" value="2.40 A"/>
    <property type="chains" value="J/j=2-40"/>
</dbReference>
<dbReference type="PDB" id="7COU">
    <property type="method" value="X-ray"/>
    <property type="resolution" value="2.25 A"/>
    <property type="chains" value="J/j=2-40"/>
</dbReference>
<dbReference type="PDB" id="7D1T">
    <property type="method" value="EM"/>
    <property type="resolution" value="1.95 A"/>
    <property type="chains" value="J/j=4-40"/>
</dbReference>
<dbReference type="PDB" id="7D1U">
    <property type="method" value="EM"/>
    <property type="resolution" value="2.08 A"/>
    <property type="chains" value="J/j=4-40"/>
</dbReference>
<dbReference type="PDB" id="7EDA">
    <property type="method" value="EM"/>
    <property type="resolution" value="2.78 A"/>
    <property type="chains" value="J=1-40"/>
</dbReference>
<dbReference type="PDB" id="8GN0">
    <property type="method" value="X-ray"/>
    <property type="resolution" value="2.15 A"/>
    <property type="chains" value="J/j=1-40"/>
</dbReference>
<dbReference type="PDB" id="8GN1">
    <property type="method" value="X-ray"/>
    <property type="resolution" value="2.10 A"/>
    <property type="chains" value="J/j=1-40"/>
</dbReference>
<dbReference type="PDB" id="8GN2">
    <property type="method" value="X-ray"/>
    <property type="resolution" value="1.95 A"/>
    <property type="chains" value="J/j=1-40"/>
</dbReference>
<dbReference type="PDB" id="8IR5">
    <property type="method" value="X-ray"/>
    <property type="resolution" value="2.15 A"/>
    <property type="chains" value="J/j=2-40"/>
</dbReference>
<dbReference type="PDB" id="8IR6">
    <property type="method" value="X-ray"/>
    <property type="resolution" value="2.20 A"/>
    <property type="chains" value="J/j=2-40"/>
</dbReference>
<dbReference type="PDB" id="8IR7">
    <property type="method" value="X-ray"/>
    <property type="resolution" value="2.25 A"/>
    <property type="chains" value="J/j=2-40"/>
</dbReference>
<dbReference type="PDB" id="8IR8">
    <property type="method" value="X-ray"/>
    <property type="resolution" value="2.25 A"/>
    <property type="chains" value="J/j=2-40"/>
</dbReference>
<dbReference type="PDB" id="8IR9">
    <property type="method" value="X-ray"/>
    <property type="resolution" value="2.20 A"/>
    <property type="chains" value="J/j=2-40"/>
</dbReference>
<dbReference type="PDB" id="8IRA">
    <property type="method" value="X-ray"/>
    <property type="resolution" value="2.20 A"/>
    <property type="chains" value="J/j=2-40"/>
</dbReference>
<dbReference type="PDB" id="8IRB">
    <property type="method" value="X-ray"/>
    <property type="resolution" value="2.30 A"/>
    <property type="chains" value="J/j=2-40"/>
</dbReference>
<dbReference type="PDB" id="8IRC">
    <property type="method" value="X-ray"/>
    <property type="resolution" value="2.25 A"/>
    <property type="chains" value="J/j=2-40"/>
</dbReference>
<dbReference type="PDB" id="8IRD">
    <property type="method" value="X-ray"/>
    <property type="resolution" value="2.30 A"/>
    <property type="chains" value="J/j=2-40"/>
</dbReference>
<dbReference type="PDB" id="8IRE">
    <property type="method" value="X-ray"/>
    <property type="resolution" value="2.25 A"/>
    <property type="chains" value="J/j=2-40"/>
</dbReference>
<dbReference type="PDB" id="8IRF">
    <property type="method" value="X-ray"/>
    <property type="resolution" value="2.25 A"/>
    <property type="chains" value="J/j=2-40"/>
</dbReference>
<dbReference type="PDB" id="8IRG">
    <property type="method" value="X-ray"/>
    <property type="resolution" value="2.30 A"/>
    <property type="chains" value="J/j=2-40"/>
</dbReference>
<dbReference type="PDB" id="8IRH">
    <property type="method" value="X-ray"/>
    <property type="resolution" value="2.25 A"/>
    <property type="chains" value="J/j=2-40"/>
</dbReference>
<dbReference type="PDB" id="8IRI">
    <property type="method" value="X-ray"/>
    <property type="resolution" value="2.25 A"/>
    <property type="chains" value="J/j=2-40"/>
</dbReference>
<dbReference type="PDBsum" id="3A0B"/>
<dbReference type="PDBsum" id="3A0H"/>
<dbReference type="PDBsum" id="3WU2"/>
<dbReference type="PDBsum" id="4IL6"/>
<dbReference type="PDBsum" id="4UB6"/>
<dbReference type="PDBsum" id="4UB8"/>
<dbReference type="PDBsum" id="5B5E"/>
<dbReference type="PDBsum" id="5B66"/>
<dbReference type="PDBsum" id="5GTH"/>
<dbReference type="PDBsum" id="5GTI"/>
<dbReference type="PDBsum" id="5V2C"/>
<dbReference type="PDBsum" id="5WS5"/>
<dbReference type="PDBsum" id="5WS6"/>
<dbReference type="PDBsum" id="6JLJ"/>
<dbReference type="PDBsum" id="6JLK"/>
<dbReference type="PDBsum" id="6JLL"/>
<dbReference type="PDBsum" id="6JLM"/>
<dbReference type="PDBsum" id="6JLN"/>
<dbReference type="PDBsum" id="6JLO"/>
<dbReference type="PDBsum" id="6JLP"/>
<dbReference type="PDBsum" id="7CJI"/>
<dbReference type="PDBsum" id="7CJJ"/>
<dbReference type="PDBsum" id="7COU"/>
<dbReference type="PDBsum" id="7D1T"/>
<dbReference type="PDBsum" id="7D1U"/>
<dbReference type="PDBsum" id="7EDA"/>
<dbReference type="PDBsum" id="8GN0"/>
<dbReference type="PDBsum" id="8GN1"/>
<dbReference type="PDBsum" id="8GN2"/>
<dbReference type="PDBsum" id="8IR5"/>
<dbReference type="PDBsum" id="8IR6"/>
<dbReference type="PDBsum" id="8IR7"/>
<dbReference type="PDBsum" id="8IR8"/>
<dbReference type="PDBsum" id="8IR9"/>
<dbReference type="PDBsum" id="8IRA"/>
<dbReference type="PDBsum" id="8IRB"/>
<dbReference type="PDBsum" id="8IRC"/>
<dbReference type="PDBsum" id="8IRD"/>
<dbReference type="PDBsum" id="8IRE"/>
<dbReference type="PDBsum" id="8IRF"/>
<dbReference type="PDBsum" id="8IRG"/>
<dbReference type="PDBsum" id="8IRH"/>
<dbReference type="PDBsum" id="8IRI"/>
<dbReference type="EMDB" id="EMD-30547"/>
<dbReference type="EMDB" id="EMD-30548"/>
<dbReference type="EMDB" id="EMD-31062"/>
<dbReference type="SMR" id="Q7DGD4"/>
<dbReference type="DIP" id="DIP-48870N"/>
<dbReference type="IntAct" id="Q7DGD4">
    <property type="interactions" value="1"/>
</dbReference>
<dbReference type="EvolutionaryTrace" id="Q7DGD4"/>
<dbReference type="GO" id="GO:0009539">
    <property type="term" value="C:photosystem II reaction center"/>
    <property type="evidence" value="ECO:0007669"/>
    <property type="project" value="InterPro"/>
</dbReference>
<dbReference type="GO" id="GO:0031676">
    <property type="term" value="C:plasma membrane-derived thylakoid membrane"/>
    <property type="evidence" value="ECO:0007669"/>
    <property type="project" value="UniProtKB-SubCell"/>
</dbReference>
<dbReference type="GO" id="GO:0015979">
    <property type="term" value="P:photosynthesis"/>
    <property type="evidence" value="ECO:0007669"/>
    <property type="project" value="UniProtKB-UniRule"/>
</dbReference>
<dbReference type="Gene3D" id="6.10.250.2070">
    <property type="match status" value="1"/>
</dbReference>
<dbReference type="HAMAP" id="MF_01305">
    <property type="entry name" value="PSII_PsbJ"/>
    <property type="match status" value="1"/>
</dbReference>
<dbReference type="InterPro" id="IPR002682">
    <property type="entry name" value="PSII_PsbJ"/>
</dbReference>
<dbReference type="InterPro" id="IPR037267">
    <property type="entry name" value="PSII_PsbJ_sf"/>
</dbReference>
<dbReference type="NCBIfam" id="NF002722">
    <property type="entry name" value="PRK02565.1"/>
    <property type="match status" value="1"/>
</dbReference>
<dbReference type="PANTHER" id="PTHR34812">
    <property type="entry name" value="PHOTOSYSTEM II REACTION CENTER PROTEIN J"/>
    <property type="match status" value="1"/>
</dbReference>
<dbReference type="PANTHER" id="PTHR34812:SF3">
    <property type="entry name" value="PHOTOSYSTEM II REACTION CENTER PROTEIN J"/>
    <property type="match status" value="1"/>
</dbReference>
<dbReference type="Pfam" id="PF01788">
    <property type="entry name" value="PsbJ"/>
    <property type="match status" value="1"/>
</dbReference>
<dbReference type="SUPFAM" id="SSF161021">
    <property type="entry name" value="Photosystem II reaction center protein J, PsbJ"/>
    <property type="match status" value="1"/>
</dbReference>
<evidence type="ECO:0000255" key="1">
    <source>
        <dbReference type="HAMAP-Rule" id="MF_01305"/>
    </source>
</evidence>
<evidence type="ECO:0000269" key="2">
    <source>
    </source>
</evidence>
<evidence type="ECO:0000269" key="3">
    <source>
    </source>
</evidence>
<evidence type="ECO:0000269" key="4">
    <source>
    </source>
</evidence>
<evidence type="ECO:0007829" key="5">
    <source>
        <dbReference type="PDB" id="5B66"/>
    </source>
</evidence>
<evidence type="ECO:0007829" key="6">
    <source>
        <dbReference type="PDB" id="7D1T"/>
    </source>
</evidence>
<comment type="function">
    <text evidence="1 2 4">One of the components of the core complex of photosystem II (PSII). PSII is a light-driven water:plastoquinone oxidoreductase that uses light energy to abstract electrons from H(2)O, generating O(2) and a proton gradient subsequently used for ATP formation. It consists of a core antenna complex that captures photons, and an electron transfer chain that converts photonic excitation into a charge separation.</text>
</comment>
<comment type="cofactor">
    <text evidence="2 3 4">PSII binds multiple chlorophylls, carotenoids and specific lipids.</text>
</comment>
<comment type="subunit">
    <text evidence="1 2 3 4">PSII is composed of 1 copy each of membrane proteins PsbA, PsbB, PsbC, PsbD, PsbE, PsbF, PsbH, PsbI, PsbJ, PsbK, PsbL, PsbM, PsbT, PsbX, PsbY, PsbZ, Psb30/Ycf12, peripheral proteins PsbO, CyanoQ (PsbQ), PsbU, PsbV and a large number of cofactors. It forms dimeric complexes.</text>
</comment>
<comment type="subcellular location">
    <subcellularLocation>
        <location evidence="1 2 3 4">Cellular thylakoid membrane</location>
        <topology evidence="1 2 3 4">Single-pass membrane protein</topology>
    </subcellularLocation>
</comment>
<comment type="similarity">
    <text evidence="1">Belongs to the PsbJ family.</text>
</comment>
<keyword id="KW-0002">3D-structure</keyword>
<keyword id="KW-0472">Membrane</keyword>
<keyword id="KW-0602">Photosynthesis</keyword>
<keyword id="KW-0604">Photosystem II</keyword>
<keyword id="KW-0674">Reaction center</keyword>
<keyword id="KW-0793">Thylakoid</keyword>
<keyword id="KW-0812">Transmembrane</keyword>
<keyword id="KW-1133">Transmembrane helix</keyword>
<protein>
    <recommendedName>
        <fullName evidence="1">Photosystem II reaction center protein J</fullName>
        <shortName evidence="1">PSII-J</shortName>
    </recommendedName>
</protein>
<organism>
    <name type="scientific">Thermostichus vulcanus</name>
    <name type="common">Synechococcus vulcanus</name>
    <dbReference type="NCBI Taxonomy" id="32053"/>
    <lineage>
        <taxon>Bacteria</taxon>
        <taxon>Bacillati</taxon>
        <taxon>Cyanobacteriota</taxon>
        <taxon>Cyanophyceae</taxon>
        <taxon>Thermostichales</taxon>
        <taxon>Thermostichaceae</taxon>
        <taxon>Thermostichus</taxon>
    </lineage>
</organism>
<accession>Q7DGD4</accession>
<reference key="1">
    <citation type="journal article" date="2002" name="Plant Cell Physiol.">
        <title>Low-molecular-mass polypeptide components of a photosystem II preparation from the thermophilic cyanobacterium Thermosynechococcus vulcanus.</title>
        <authorList>
            <person name="Kashino Y."/>
            <person name="Koike H."/>
            <person name="Yoshio M."/>
            <person name="Egashira H."/>
            <person name="Ikeuchi M."/>
            <person name="Pakrasi H.B."/>
            <person name="Satoh K."/>
        </authorList>
    </citation>
    <scope>NUCLEOTIDE SEQUENCE [GENOMIC DNA]</scope>
</reference>
<reference key="2">
    <citation type="journal article" date="2009" name="Proc. Natl. Acad. Sci. U.S.A.">
        <title>Location of chloride and its possible functions in oxygen-evolving photosystem II revealed by X-ray crystallography.</title>
        <authorList>
            <person name="Kawakami K."/>
            <person name="Umena Y."/>
            <person name="Kamiya N."/>
            <person name="Shen J.R."/>
        </authorList>
    </citation>
    <scope>X-RAY CRYSTALLOGRAPHY (3.7 ANGSTROMS) IN PHOTOSYSTEM II</scope>
    <scope>FUNCTION</scope>
    <scope>COFACTOR</scope>
    <scope>SUBUNIT</scope>
    <scope>SUBCELLULAR LOCATION</scope>
</reference>
<reference key="3">
    <citation type="journal article" date="2011" name="Nature">
        <title>Crystal structure of oxygen-evolving photosystem II at a resolution of 1.9 A.</title>
        <authorList>
            <person name="Umena Y."/>
            <person name="Kawakami K."/>
            <person name="Shen J.R."/>
            <person name="Kamiya N."/>
        </authorList>
    </citation>
    <scope>X-RAY CRYSTALLOGRAPHY (1.9 ANGSTROMS) IN PHOTOSYSTEM II</scope>
    <scope>COFACTOR</scope>
    <scope>SUBUNIT</scope>
    <scope>SUBCELLULAR LOCATION</scope>
    <scope>TOPOLOGY</scope>
</reference>
<reference key="4">
    <citation type="journal article" date="2013" name="Proc. Natl. Acad. Sci. U.S.A.">
        <title>Structure of Sr-substituted photosystem II at 2.1 A resolution and its implications in the mechanism of water oxidation.</title>
        <authorList>
            <person name="Koua F.H."/>
            <person name="Umena Y."/>
            <person name="Kawakami K."/>
            <person name="Shen J.R."/>
        </authorList>
    </citation>
    <scope>X-RAY CRYSTALLOGRAPHY (2.1 ANGSTROMS) OF 4-40 IN PHOTOSYSTEM II</scope>
    <scope>FUNCTION</scope>
    <scope>COFACTOR</scope>
    <scope>SUBUNIT</scope>
    <scope>SUBCELLULAR LOCATION</scope>
</reference>
<proteinExistence type="evidence at protein level"/>
<feature type="chain" id="PRO_0000292241" description="Photosystem II reaction center protein J">
    <location>
        <begin position="1"/>
        <end position="40"/>
    </location>
</feature>
<feature type="topological domain" description="Cytoplasmic" evidence="3">
    <location>
        <begin position="1"/>
        <end position="11"/>
    </location>
</feature>
<feature type="transmembrane region" description="Helical" evidence="3">
    <location>
        <begin position="12"/>
        <end position="26"/>
    </location>
</feature>
<feature type="topological domain" description="Lumenal" evidence="3">
    <location>
        <begin position="27"/>
        <end position="40"/>
    </location>
</feature>
<feature type="helix" evidence="5">
    <location>
        <begin position="10"/>
        <end position="32"/>
    </location>
</feature>
<feature type="strand" evidence="6">
    <location>
        <begin position="33"/>
        <end position="35"/>
    </location>
</feature>